<keyword id="KW-0217">Developmental protein</keyword>
<keyword id="KW-0325">Glycoprotein</keyword>
<keyword id="KW-0328">Glycosyltransferase</keyword>
<keyword id="KW-0333">Golgi apparatus</keyword>
<keyword id="KW-0443">Lipid metabolism</keyword>
<keyword id="KW-0472">Membrane</keyword>
<keyword id="KW-1185">Reference proteome</keyword>
<keyword id="KW-0735">Signal-anchor</keyword>
<keyword id="KW-0808">Transferase</keyword>
<keyword id="KW-0812">Transmembrane</keyword>
<keyword id="KW-1133">Transmembrane helix</keyword>
<dbReference type="EC" id="2.4.1.206" evidence="3"/>
<dbReference type="EMBL" id="AB059620">
    <property type="protein sequence ID" value="BAC66698.1"/>
    <property type="molecule type" value="mRNA"/>
</dbReference>
<dbReference type="EMBL" id="AY029203">
    <property type="protein sequence ID" value="AAK31579.1"/>
    <property type="molecule type" value="mRNA"/>
</dbReference>
<dbReference type="EMBL" id="AK032911">
    <property type="protein sequence ID" value="BAC28082.1"/>
    <property type="molecule type" value="mRNA"/>
</dbReference>
<dbReference type="EMBL" id="AK048010">
    <property type="protein sequence ID" value="BAC33213.1"/>
    <property type="molecule type" value="mRNA"/>
</dbReference>
<dbReference type="EMBL" id="AK083839">
    <property type="protein sequence ID" value="BAC39037.1"/>
    <property type="molecule type" value="mRNA"/>
</dbReference>
<dbReference type="EMBL" id="BC063076">
    <property type="protein sequence ID" value="AAH63076.1"/>
    <property type="molecule type" value="mRNA"/>
</dbReference>
<dbReference type="CCDS" id="CCDS28040.1"/>
<dbReference type="RefSeq" id="NP_001152879.1">
    <property type="nucleotide sequence ID" value="NM_001159407.1"/>
</dbReference>
<dbReference type="RefSeq" id="NP_001152880.1">
    <property type="nucleotide sequence ID" value="NM_001159408.1"/>
</dbReference>
<dbReference type="RefSeq" id="NP_473393.2">
    <property type="nucleotide sequence ID" value="NM_054052.3"/>
</dbReference>
<dbReference type="RefSeq" id="XP_006521769.1">
    <property type="nucleotide sequence ID" value="XM_006521706.4"/>
</dbReference>
<dbReference type="RefSeq" id="XP_030104776.1">
    <property type="nucleotide sequence ID" value="XM_030248916.2"/>
</dbReference>
<dbReference type="RefSeq" id="XP_036015625.1">
    <property type="nucleotide sequence ID" value="XM_036159732.1"/>
</dbReference>
<dbReference type="SMR" id="Q8BGY6"/>
<dbReference type="BioGRID" id="223836">
    <property type="interactions" value="1"/>
</dbReference>
<dbReference type="FunCoup" id="Q8BGY6">
    <property type="interactions" value="396"/>
</dbReference>
<dbReference type="STRING" id="10090.ENSMUSP00000126157"/>
<dbReference type="SwissLipids" id="SLP:000000767"/>
<dbReference type="CAZy" id="GT31">
    <property type="family name" value="Glycosyltransferase Family 31"/>
</dbReference>
<dbReference type="GlyCosmos" id="Q8BGY6">
    <property type="glycosylation" value="1 site, No reported glycans"/>
</dbReference>
<dbReference type="GlyGen" id="Q8BGY6">
    <property type="glycosylation" value="2 sites, 1 N-linked glycan (1 site)"/>
</dbReference>
<dbReference type="iPTMnet" id="Q8BGY6"/>
<dbReference type="PhosphoSitePlus" id="Q8BGY6"/>
<dbReference type="PaxDb" id="10090-ENSMUSP00000078712"/>
<dbReference type="ProteomicsDB" id="265190"/>
<dbReference type="Antibodypedia" id="2643">
    <property type="antibodies" value="129 antibodies from 22 providers"/>
</dbReference>
<dbReference type="DNASU" id="108105"/>
<dbReference type="Ensembl" id="ENSMUST00000079780.10">
    <property type="protein sequence ID" value="ENSMUSP00000078712.4"/>
    <property type="gene ID" value="ENSMUSG00000022686.15"/>
</dbReference>
<dbReference type="Ensembl" id="ENSMUST00000119468.2">
    <property type="protein sequence ID" value="ENSMUSP00000113145.2"/>
    <property type="gene ID" value="ENSMUSG00000022686.15"/>
</dbReference>
<dbReference type="Ensembl" id="ENSMUST00000121344.8">
    <property type="protein sequence ID" value="ENSMUSP00000112624.2"/>
    <property type="gene ID" value="ENSMUSG00000022686.15"/>
</dbReference>
<dbReference type="Ensembl" id="ENSMUST00000164397.8">
    <property type="protein sequence ID" value="ENSMUSP00000126157.2"/>
    <property type="gene ID" value="ENSMUSG00000022686.15"/>
</dbReference>
<dbReference type="GeneID" id="108105"/>
<dbReference type="KEGG" id="mmu:108105"/>
<dbReference type="UCSC" id="uc007ypc.2">
    <property type="organism name" value="mouse"/>
</dbReference>
<dbReference type="AGR" id="MGI:2137302"/>
<dbReference type="CTD" id="84002"/>
<dbReference type="MGI" id="MGI:2137302">
    <property type="gene designation" value="B3gnt5"/>
</dbReference>
<dbReference type="VEuPathDB" id="HostDB:ENSMUSG00000022686"/>
<dbReference type="eggNOG" id="KOG2287">
    <property type="taxonomic scope" value="Eukaryota"/>
</dbReference>
<dbReference type="GeneTree" id="ENSGT00940000159676"/>
<dbReference type="HOGENOM" id="CLU_036849_2_4_1"/>
<dbReference type="InParanoid" id="Q8BGY6"/>
<dbReference type="OMA" id="VQLFATC"/>
<dbReference type="OrthoDB" id="115198at2759"/>
<dbReference type="PhylomeDB" id="Q8BGY6"/>
<dbReference type="TreeFam" id="TF318639"/>
<dbReference type="BRENDA" id="2.4.1.206">
    <property type="organism ID" value="3474"/>
</dbReference>
<dbReference type="Reactome" id="R-MMU-913709">
    <property type="pathway name" value="O-linked glycosylation of mucins"/>
</dbReference>
<dbReference type="Reactome" id="R-MMU-9840309">
    <property type="pathway name" value="Glycosphingolipid biosynthesis"/>
</dbReference>
<dbReference type="UniPathway" id="UPA00378"/>
<dbReference type="BioGRID-ORCS" id="108105">
    <property type="hits" value="2 hits in 80 CRISPR screens"/>
</dbReference>
<dbReference type="ChiTaRS" id="B3gnt5">
    <property type="organism name" value="mouse"/>
</dbReference>
<dbReference type="PRO" id="PR:Q8BGY6"/>
<dbReference type="Proteomes" id="UP000000589">
    <property type="component" value="Chromosome 16"/>
</dbReference>
<dbReference type="RNAct" id="Q8BGY6">
    <property type="molecule type" value="protein"/>
</dbReference>
<dbReference type="Bgee" id="ENSMUSG00000022686">
    <property type="expression patterns" value="Expressed in epithelium of lens and 166 other cell types or tissues"/>
</dbReference>
<dbReference type="GO" id="GO:0000139">
    <property type="term" value="C:Golgi membrane"/>
    <property type="evidence" value="ECO:0007669"/>
    <property type="project" value="UniProtKB-SubCell"/>
</dbReference>
<dbReference type="GO" id="GO:0047256">
    <property type="term" value="F:lactosylceramide 1,3-N-acetyl-beta-D-glucosaminyltransferase activity"/>
    <property type="evidence" value="ECO:0000250"/>
    <property type="project" value="UniProtKB"/>
</dbReference>
<dbReference type="GO" id="GO:0007417">
    <property type="term" value="P:central nervous system development"/>
    <property type="evidence" value="ECO:0000250"/>
    <property type="project" value="UniProtKB"/>
</dbReference>
<dbReference type="GO" id="GO:0006486">
    <property type="term" value="P:protein glycosylation"/>
    <property type="evidence" value="ECO:0007669"/>
    <property type="project" value="UniProtKB-UniPathway"/>
</dbReference>
<dbReference type="GO" id="GO:0030148">
    <property type="term" value="P:sphingolipid biosynthetic process"/>
    <property type="evidence" value="ECO:0000304"/>
    <property type="project" value="MGI"/>
</dbReference>
<dbReference type="FunFam" id="3.90.550.50:FF:000019">
    <property type="entry name" value="Hexosyltransferase"/>
    <property type="match status" value="1"/>
</dbReference>
<dbReference type="Gene3D" id="3.90.550.50">
    <property type="match status" value="1"/>
</dbReference>
<dbReference type="InterPro" id="IPR002659">
    <property type="entry name" value="Glyco_trans_31"/>
</dbReference>
<dbReference type="PANTHER" id="PTHR11214">
    <property type="entry name" value="BETA-1,3-N-ACETYLGLUCOSAMINYLTRANSFERASE"/>
    <property type="match status" value="1"/>
</dbReference>
<dbReference type="PANTHER" id="PTHR11214:SF21">
    <property type="entry name" value="LACTOSYLCERAMIDE 1,3-N-ACETYL-BETA-D-GLUCOSAMINYLTRANSFERASE"/>
    <property type="match status" value="1"/>
</dbReference>
<dbReference type="Pfam" id="PF01762">
    <property type="entry name" value="Galactosyl_T"/>
    <property type="match status" value="1"/>
</dbReference>
<organism>
    <name type="scientific">Mus musculus</name>
    <name type="common">Mouse</name>
    <dbReference type="NCBI Taxonomy" id="10090"/>
    <lineage>
        <taxon>Eukaryota</taxon>
        <taxon>Metazoa</taxon>
        <taxon>Chordata</taxon>
        <taxon>Craniata</taxon>
        <taxon>Vertebrata</taxon>
        <taxon>Euteleostomi</taxon>
        <taxon>Mammalia</taxon>
        <taxon>Eutheria</taxon>
        <taxon>Euarchontoglires</taxon>
        <taxon>Glires</taxon>
        <taxon>Rodentia</taxon>
        <taxon>Myomorpha</taxon>
        <taxon>Muroidea</taxon>
        <taxon>Muridae</taxon>
        <taxon>Murinae</taxon>
        <taxon>Mus</taxon>
        <taxon>Mus</taxon>
    </lineage>
</organism>
<comment type="function">
    <text evidence="3">Beta-1,3-N-acetylglucosaminyltransferase that plays a key role in the synthesis of lacto- or neolacto-series carbohydrate chains on glycolipids, notably by participating in biosynthesis of HNK-1 and Lewis X carbohydrate structures. Has strong activity toward lactosylceramide (LacCer) and neolactotetraosylceramide (nLc(4)Cer; paragloboside), resulting in the synthesis of Lc(3)Cer and neolactopentaosylceramide (nLc(5)Cer), respectively. Plays a central role in regulating neolacto-series glycolipid synthesis during embryonic development.</text>
</comment>
<comment type="catalytic activity">
    <reaction evidence="3">
        <text>a beta-D-Gal-(1-&gt;4)-beta-D-Glc-(1&lt;-&gt;1)-Cer(d18:1(4E)) + UDP-N-acetyl-alpha-D-glucosamine = a beta-D-GlcNAc-(1-&gt;3)-beta-D-Gal-(1-&gt;4)-beta-D-Glc-(1&lt;-&gt;1)-Cer(d18:1(4E)) + UDP + H(+)</text>
        <dbReference type="Rhea" id="RHEA:13905"/>
        <dbReference type="ChEBI" id="CHEBI:15378"/>
        <dbReference type="ChEBI" id="CHEBI:17103"/>
        <dbReference type="ChEBI" id="CHEBI:17950"/>
        <dbReference type="ChEBI" id="CHEBI:57705"/>
        <dbReference type="ChEBI" id="CHEBI:58223"/>
        <dbReference type="EC" id="2.4.1.206"/>
    </reaction>
    <physiologicalReaction direction="left-to-right" evidence="3">
        <dbReference type="Rhea" id="RHEA:13906"/>
    </physiologicalReaction>
</comment>
<comment type="catalytic activity">
    <reaction evidence="3">
        <text>a neolactoside nLc4Cer(d18:1(4E)) + UDP-N-acetyl-alpha-D-glucosamine = a neolactoside IV(3)-beta-GlcNAc-nLc4Cer(d18:1(4E)) + UDP + H(+)</text>
        <dbReference type="Rhea" id="RHEA:23004"/>
        <dbReference type="ChEBI" id="CHEBI:15378"/>
        <dbReference type="ChEBI" id="CHEBI:17006"/>
        <dbReference type="ChEBI" id="CHEBI:57705"/>
        <dbReference type="ChEBI" id="CHEBI:58223"/>
        <dbReference type="ChEBI" id="CHEBI:142448"/>
    </reaction>
    <physiologicalReaction direction="left-to-right" evidence="3">
        <dbReference type="Rhea" id="RHEA:23005"/>
    </physiologicalReaction>
</comment>
<comment type="pathway">
    <text>Protein modification; protein glycosylation.</text>
</comment>
<comment type="subcellular location">
    <subcellularLocation>
        <location evidence="1">Golgi apparatus membrane</location>
        <topology evidence="1">Single-pass type II membrane protein</topology>
    </subcellularLocation>
</comment>
<comment type="tissue specificity">
    <text evidence="3">Highly expressed in adult spleen, placenta and cerebellar Purkinje cells where it colocalizes with HNK-1. Expressed at lower level in brain, lung, thymus and muscle.</text>
</comment>
<comment type="developmental stage">
    <text evidence="3">Mainly expressed during embryonic development. Expressed in most tissues at embryonic day 11 with elevated expression in the developing central nervous system.</text>
</comment>
<comment type="similarity">
    <text evidence="4">Belongs to the glycosyltransferase 31 family.</text>
</comment>
<protein>
    <recommendedName>
        <fullName evidence="4">Lactosylceramide 1,3-N-acetyl-beta-D-glucosaminyltransferase</fullName>
        <ecNumber evidence="3">2.4.1.206</ecNumber>
    </recommendedName>
    <alternativeName>
        <fullName>Lactotriaosylceramide synthase</fullName>
        <shortName>Lc(3)Cer synthase</shortName>
        <shortName>Lc3 synthase</shortName>
    </alternativeName>
    <alternativeName>
        <fullName>UDP-GlcNAc:beta-Gal beta-1,3-N-acetylglucosaminyltransferase 5</fullName>
        <shortName>BGnT-5</shortName>
        <shortName>Beta-1,3-Gn-T5</shortName>
        <shortName>Beta-1,3-N-acetylglucosaminyltransferase 5</shortName>
        <shortName>Beta3Gn-T5</shortName>
    </alternativeName>
</protein>
<feature type="chain" id="PRO_0000289210" description="Lactosylceramide 1,3-N-acetyl-beta-D-glucosaminyltransferase">
    <location>
        <begin position="1"/>
        <end position="376"/>
    </location>
</feature>
<feature type="topological domain" description="Cytoplasmic" evidence="2">
    <location>
        <begin position="1"/>
        <end position="13"/>
    </location>
</feature>
<feature type="transmembrane region" description="Helical; Signal-anchor for type II membrane protein" evidence="2">
    <location>
        <begin position="14"/>
        <end position="34"/>
    </location>
</feature>
<feature type="topological domain" description="Lumenal" evidence="2">
    <location>
        <begin position="35"/>
        <end position="376"/>
    </location>
</feature>
<feature type="glycosylation site" description="N-linked (GlcNAc...) asparagine" evidence="2">
    <location>
        <position position="57"/>
    </location>
</feature>
<feature type="sequence conflict" description="In Ref. 2; AAK31579." evidence="4" ref="2">
    <original>CPHA</original>
    <variation>VHMP</variation>
    <location>
        <begin position="181"/>
        <end position="184"/>
    </location>
</feature>
<feature type="sequence conflict" description="In Ref. 2; AAK31579." evidence="4" ref="2">
    <original>M</original>
    <variation>V</variation>
    <location>
        <position position="241"/>
    </location>
</feature>
<accession>Q8BGY6</accession>
<accession>Q810C6</accession>
<accession>Q923K7</accession>
<name>B3GN5_MOUSE</name>
<evidence type="ECO:0000250" key="1"/>
<evidence type="ECO:0000255" key="2"/>
<evidence type="ECO:0000269" key="3">
    <source>
    </source>
</evidence>
<evidence type="ECO:0000305" key="4"/>
<evidence type="ECO:0000312" key="5">
    <source>
        <dbReference type="MGI" id="MGI:2137302"/>
    </source>
</evidence>
<sequence length="376" mass="43914">MRLFVSRRVKRWKIFHFFVTCFILSFMVFWSPINNYIMSHMKSYSYRYLVNSYGFVNNSLSLKHSSVQPHYPYLINHREKCQAQDVLLLLFIKTAPENYGRRSAIRKTWGNENYVQSQLNANIKILFALGTPGPLKGKELQKRLIGEDQVYKDIIQQDFIDSFHNLTSKFLLQFSWANTFCPHAKFLMTADDDIFIHMPNLIEYLQGLEQIGVRDFWIGHVHRGGPPVRDKSSKYYVPYEMYKWPAYPDYTAGAAYVVSRDVAAKIYEASQTLNSSMYIDDVFMGLCANKVGILPQDHVFFSGEGKIPYHPCIYEKMMTSHGHLQDLQDLWIEATHPKVKNISKGFFGQIYCRLIKIVLLCRLTYRNSYPCWAAFA</sequence>
<reference key="1">
    <citation type="journal article" date="2001" name="J. Biol. Chem.">
        <title>Molecular cloning and characterization of UDP-GlcNAc:lactosylceramide beta 1,3-N-acetylglucosaminyltransferase (beta 3Gn-T5), an essential enzyme for the expression of HNK-1 and Lewis X epitopes on glycolipids.</title>
        <authorList>
            <person name="Togayachi A."/>
            <person name="Akashima T."/>
            <person name="Ookubo R."/>
            <person name="Kudo T."/>
            <person name="Nishihara S."/>
            <person name="Iwasaki H."/>
            <person name="Natsume A."/>
            <person name="Mio H."/>
            <person name="Inokuchi J."/>
            <person name="Irimura T."/>
            <person name="Sasaki K."/>
            <person name="Narimatsu H."/>
        </authorList>
    </citation>
    <scope>NUCLEOTIDE SEQUENCE [MRNA]</scope>
</reference>
<reference key="2">
    <citation type="journal article" date="2001" name="J. Biol. Chem.">
        <title>Cloning of a mouse beta 1,3 N-acetylglucosaminyltransferase GlcNAc(beta 1,3)Gal(beta 1,4)Glc-ceramide synthase gene encoding the key regulator of lacto-series glycolipid biosynthesis.</title>
        <authorList>
            <person name="Henion T.R."/>
            <person name="Zhou D."/>
            <person name="Wolfer D.P."/>
            <person name="Jungalwala F.B."/>
            <person name="Hennet T."/>
        </authorList>
    </citation>
    <scope>NUCLEOTIDE SEQUENCE [MRNA]</scope>
    <scope>ENZYME ACTIVITY</scope>
    <scope>TISSUE SPECIFICITY</scope>
    <scope>DEVELOPMENTAL STAGE</scope>
    <scope>FUNCTION</scope>
</reference>
<reference key="3">
    <citation type="journal article" date="2005" name="Science">
        <title>The transcriptional landscape of the mammalian genome.</title>
        <authorList>
            <person name="Carninci P."/>
            <person name="Kasukawa T."/>
            <person name="Katayama S."/>
            <person name="Gough J."/>
            <person name="Frith M.C."/>
            <person name="Maeda N."/>
            <person name="Oyama R."/>
            <person name="Ravasi T."/>
            <person name="Lenhard B."/>
            <person name="Wells C."/>
            <person name="Kodzius R."/>
            <person name="Shimokawa K."/>
            <person name="Bajic V.B."/>
            <person name="Brenner S.E."/>
            <person name="Batalov S."/>
            <person name="Forrest A.R."/>
            <person name="Zavolan M."/>
            <person name="Davis M.J."/>
            <person name="Wilming L.G."/>
            <person name="Aidinis V."/>
            <person name="Allen J.E."/>
            <person name="Ambesi-Impiombato A."/>
            <person name="Apweiler R."/>
            <person name="Aturaliya R.N."/>
            <person name="Bailey T.L."/>
            <person name="Bansal M."/>
            <person name="Baxter L."/>
            <person name="Beisel K.W."/>
            <person name="Bersano T."/>
            <person name="Bono H."/>
            <person name="Chalk A.M."/>
            <person name="Chiu K.P."/>
            <person name="Choudhary V."/>
            <person name="Christoffels A."/>
            <person name="Clutterbuck D.R."/>
            <person name="Crowe M.L."/>
            <person name="Dalla E."/>
            <person name="Dalrymple B.P."/>
            <person name="de Bono B."/>
            <person name="Della Gatta G."/>
            <person name="di Bernardo D."/>
            <person name="Down T."/>
            <person name="Engstrom P."/>
            <person name="Fagiolini M."/>
            <person name="Faulkner G."/>
            <person name="Fletcher C.F."/>
            <person name="Fukushima T."/>
            <person name="Furuno M."/>
            <person name="Futaki S."/>
            <person name="Gariboldi M."/>
            <person name="Georgii-Hemming P."/>
            <person name="Gingeras T.R."/>
            <person name="Gojobori T."/>
            <person name="Green R.E."/>
            <person name="Gustincich S."/>
            <person name="Harbers M."/>
            <person name="Hayashi Y."/>
            <person name="Hensch T.K."/>
            <person name="Hirokawa N."/>
            <person name="Hill D."/>
            <person name="Huminiecki L."/>
            <person name="Iacono M."/>
            <person name="Ikeo K."/>
            <person name="Iwama A."/>
            <person name="Ishikawa T."/>
            <person name="Jakt M."/>
            <person name="Kanapin A."/>
            <person name="Katoh M."/>
            <person name="Kawasawa Y."/>
            <person name="Kelso J."/>
            <person name="Kitamura H."/>
            <person name="Kitano H."/>
            <person name="Kollias G."/>
            <person name="Krishnan S.P."/>
            <person name="Kruger A."/>
            <person name="Kummerfeld S.K."/>
            <person name="Kurochkin I.V."/>
            <person name="Lareau L.F."/>
            <person name="Lazarevic D."/>
            <person name="Lipovich L."/>
            <person name="Liu J."/>
            <person name="Liuni S."/>
            <person name="McWilliam S."/>
            <person name="Madan Babu M."/>
            <person name="Madera M."/>
            <person name="Marchionni L."/>
            <person name="Matsuda H."/>
            <person name="Matsuzawa S."/>
            <person name="Miki H."/>
            <person name="Mignone F."/>
            <person name="Miyake S."/>
            <person name="Morris K."/>
            <person name="Mottagui-Tabar S."/>
            <person name="Mulder N."/>
            <person name="Nakano N."/>
            <person name="Nakauchi H."/>
            <person name="Ng P."/>
            <person name="Nilsson R."/>
            <person name="Nishiguchi S."/>
            <person name="Nishikawa S."/>
            <person name="Nori F."/>
            <person name="Ohara O."/>
            <person name="Okazaki Y."/>
            <person name="Orlando V."/>
            <person name="Pang K.C."/>
            <person name="Pavan W.J."/>
            <person name="Pavesi G."/>
            <person name="Pesole G."/>
            <person name="Petrovsky N."/>
            <person name="Piazza S."/>
            <person name="Reed J."/>
            <person name="Reid J.F."/>
            <person name="Ring B.Z."/>
            <person name="Ringwald M."/>
            <person name="Rost B."/>
            <person name="Ruan Y."/>
            <person name="Salzberg S.L."/>
            <person name="Sandelin A."/>
            <person name="Schneider C."/>
            <person name="Schoenbach C."/>
            <person name="Sekiguchi K."/>
            <person name="Semple C.A."/>
            <person name="Seno S."/>
            <person name="Sessa L."/>
            <person name="Sheng Y."/>
            <person name="Shibata Y."/>
            <person name="Shimada H."/>
            <person name="Shimada K."/>
            <person name="Silva D."/>
            <person name="Sinclair B."/>
            <person name="Sperling S."/>
            <person name="Stupka E."/>
            <person name="Sugiura K."/>
            <person name="Sultana R."/>
            <person name="Takenaka Y."/>
            <person name="Taki K."/>
            <person name="Tammoja K."/>
            <person name="Tan S.L."/>
            <person name="Tang S."/>
            <person name="Taylor M.S."/>
            <person name="Tegner J."/>
            <person name="Teichmann S.A."/>
            <person name="Ueda H.R."/>
            <person name="van Nimwegen E."/>
            <person name="Verardo R."/>
            <person name="Wei C.L."/>
            <person name="Yagi K."/>
            <person name="Yamanishi H."/>
            <person name="Zabarovsky E."/>
            <person name="Zhu S."/>
            <person name="Zimmer A."/>
            <person name="Hide W."/>
            <person name="Bult C."/>
            <person name="Grimmond S.M."/>
            <person name="Teasdale R.D."/>
            <person name="Liu E.T."/>
            <person name="Brusic V."/>
            <person name="Quackenbush J."/>
            <person name="Wahlestedt C."/>
            <person name="Mattick J.S."/>
            <person name="Hume D.A."/>
            <person name="Kai C."/>
            <person name="Sasaki D."/>
            <person name="Tomaru Y."/>
            <person name="Fukuda S."/>
            <person name="Kanamori-Katayama M."/>
            <person name="Suzuki M."/>
            <person name="Aoki J."/>
            <person name="Arakawa T."/>
            <person name="Iida J."/>
            <person name="Imamura K."/>
            <person name="Itoh M."/>
            <person name="Kato T."/>
            <person name="Kawaji H."/>
            <person name="Kawagashira N."/>
            <person name="Kawashima T."/>
            <person name="Kojima M."/>
            <person name="Kondo S."/>
            <person name="Konno H."/>
            <person name="Nakano K."/>
            <person name="Ninomiya N."/>
            <person name="Nishio T."/>
            <person name="Okada M."/>
            <person name="Plessy C."/>
            <person name="Shibata K."/>
            <person name="Shiraki T."/>
            <person name="Suzuki S."/>
            <person name="Tagami M."/>
            <person name="Waki K."/>
            <person name="Watahiki A."/>
            <person name="Okamura-Oho Y."/>
            <person name="Suzuki H."/>
            <person name="Kawai J."/>
            <person name="Hayashizaki Y."/>
        </authorList>
    </citation>
    <scope>NUCLEOTIDE SEQUENCE [LARGE SCALE MRNA]</scope>
    <source>
        <strain>C57BL/6J</strain>
        <tissue>Head</tissue>
        <tissue>Spinal ganglion</tissue>
        <tissue>Wolffian duct</tissue>
    </source>
</reference>
<reference key="4">
    <citation type="journal article" date="2004" name="Genome Res.">
        <title>The status, quality, and expansion of the NIH full-length cDNA project: the Mammalian Gene Collection (MGC).</title>
        <authorList>
            <consortium name="The MGC Project Team"/>
        </authorList>
    </citation>
    <scope>NUCLEOTIDE SEQUENCE [LARGE SCALE MRNA]</scope>
    <source>
        <strain>C57BL/6J</strain>
        <tissue>Brain</tissue>
    </source>
</reference>
<gene>
    <name evidence="5" type="primary">B3gnt5</name>
</gene>
<proteinExistence type="evidence at transcript level"/>